<proteinExistence type="inferred from homology"/>
<gene>
    <name evidence="1" type="primary">argE</name>
    <name type="ordered locus">BUAP5A_046</name>
</gene>
<reference key="1">
    <citation type="journal article" date="2009" name="Science">
        <title>The dynamics and time scale of ongoing genomic erosion in symbiotic bacteria.</title>
        <authorList>
            <person name="Moran N.A."/>
            <person name="McLaughlin H.J."/>
            <person name="Sorek R."/>
        </authorList>
    </citation>
    <scope>NUCLEOTIDE SEQUENCE [LARGE SCALE GENOMIC DNA]</scope>
    <source>
        <strain>5A</strain>
    </source>
</reference>
<comment type="function">
    <text evidence="1">Catalyzes the hydrolysis of the amide bond of N(2)-acetylated L-amino acids. Cleaves the acetyl group from N-acetyl-L-ornithine to form L-ornithine, an intermediate in L-arginine biosynthesis pathway, and a branchpoint in the synthesis of polyamines.</text>
</comment>
<comment type="catalytic activity">
    <reaction evidence="1">
        <text>N(2)-acetyl-L-ornithine + H2O = L-ornithine + acetate</text>
        <dbReference type="Rhea" id="RHEA:15941"/>
        <dbReference type="ChEBI" id="CHEBI:15377"/>
        <dbReference type="ChEBI" id="CHEBI:30089"/>
        <dbReference type="ChEBI" id="CHEBI:46911"/>
        <dbReference type="ChEBI" id="CHEBI:57805"/>
        <dbReference type="EC" id="3.5.1.16"/>
    </reaction>
</comment>
<comment type="cofactor">
    <cofactor evidence="1">
        <name>Zn(2+)</name>
        <dbReference type="ChEBI" id="CHEBI:29105"/>
    </cofactor>
    <cofactor evidence="1">
        <name>Co(2+)</name>
        <dbReference type="ChEBI" id="CHEBI:48828"/>
    </cofactor>
    <text evidence="1">Binds 2 Zn(2+) or Co(2+) ions per subunit.</text>
</comment>
<comment type="cofactor">
    <cofactor evidence="1">
        <name>glutathione</name>
        <dbReference type="ChEBI" id="CHEBI:57925"/>
    </cofactor>
</comment>
<comment type="pathway">
    <text evidence="1">Amino-acid biosynthesis; L-arginine biosynthesis; L-ornithine from N(2)-acetyl-L-ornithine (linear): step 1/1.</text>
</comment>
<comment type="subunit">
    <text evidence="1">Homodimer.</text>
</comment>
<comment type="subcellular location">
    <subcellularLocation>
        <location evidence="1">Cytoplasm</location>
    </subcellularLocation>
</comment>
<comment type="similarity">
    <text evidence="1">Belongs to the peptidase M20A family. ArgE subfamily.</text>
</comment>
<evidence type="ECO:0000255" key="1">
    <source>
        <dbReference type="HAMAP-Rule" id="MF_01108"/>
    </source>
</evidence>
<protein>
    <recommendedName>
        <fullName evidence="1">Acetylornithine deacetylase</fullName>
        <shortName evidence="1">AO</shortName>
        <shortName evidence="1">Acetylornithinase</shortName>
        <ecNumber evidence="1">3.5.1.16</ecNumber>
    </recommendedName>
    <alternativeName>
        <fullName evidence="1">N-acetylornithinase</fullName>
        <shortName evidence="1">NAO</shortName>
    </alternativeName>
</protein>
<feature type="chain" id="PRO_1000163951" description="Acetylornithine deacetylase">
    <location>
        <begin position="1"/>
        <end position="381"/>
    </location>
</feature>
<feature type="active site" evidence="1">
    <location>
        <position position="81"/>
    </location>
</feature>
<feature type="active site" evidence="1">
    <location>
        <position position="143"/>
    </location>
</feature>
<feature type="binding site" evidence="1">
    <location>
        <position position="79"/>
    </location>
    <ligand>
        <name>Zn(2+)</name>
        <dbReference type="ChEBI" id="CHEBI:29105"/>
        <label>1</label>
    </ligand>
</feature>
<feature type="binding site" evidence="1">
    <location>
        <position position="111"/>
    </location>
    <ligand>
        <name>Zn(2+)</name>
        <dbReference type="ChEBI" id="CHEBI:29105"/>
        <label>1</label>
    </ligand>
</feature>
<feature type="binding site" evidence="1">
    <location>
        <position position="111"/>
    </location>
    <ligand>
        <name>Zn(2+)</name>
        <dbReference type="ChEBI" id="CHEBI:29105"/>
        <label>2</label>
    </ligand>
</feature>
<feature type="binding site" evidence="1">
    <location>
        <position position="144"/>
    </location>
    <ligand>
        <name>Zn(2+)</name>
        <dbReference type="ChEBI" id="CHEBI:29105"/>
        <label>2</label>
    </ligand>
</feature>
<feature type="binding site" evidence="1">
    <location>
        <position position="168"/>
    </location>
    <ligand>
        <name>Zn(2+)</name>
        <dbReference type="ChEBI" id="CHEBI:29105"/>
        <label>1</label>
    </ligand>
</feature>
<feature type="binding site" evidence="1">
    <location>
        <position position="354"/>
    </location>
    <ligand>
        <name>Zn(2+)</name>
        <dbReference type="ChEBI" id="CHEBI:29105"/>
        <label>2</label>
    </ligand>
</feature>
<organism>
    <name type="scientific">Buchnera aphidicola subsp. Acyrthosiphon pisum (strain 5A)</name>
    <dbReference type="NCBI Taxonomy" id="563178"/>
    <lineage>
        <taxon>Bacteria</taxon>
        <taxon>Pseudomonadati</taxon>
        <taxon>Pseudomonadota</taxon>
        <taxon>Gammaproteobacteria</taxon>
        <taxon>Enterobacterales</taxon>
        <taxon>Erwiniaceae</taxon>
        <taxon>Buchnera</taxon>
    </lineage>
</organism>
<dbReference type="EC" id="3.5.1.16" evidence="1"/>
<dbReference type="EMBL" id="CP001161">
    <property type="protein sequence ID" value="ACL30427.1"/>
    <property type="molecule type" value="Genomic_DNA"/>
</dbReference>
<dbReference type="RefSeq" id="WP_009874004.1">
    <property type="nucleotide sequence ID" value="NC_011833.1"/>
</dbReference>
<dbReference type="SMR" id="B8D8K5"/>
<dbReference type="KEGG" id="bap:BUAP5A_046"/>
<dbReference type="HOGENOM" id="CLU_021802_2_4_6"/>
<dbReference type="OrthoDB" id="3665926at2"/>
<dbReference type="UniPathway" id="UPA00068">
    <property type="reaction ID" value="UER00110"/>
</dbReference>
<dbReference type="Proteomes" id="UP000006904">
    <property type="component" value="Chromosome"/>
</dbReference>
<dbReference type="GO" id="GO:0005737">
    <property type="term" value="C:cytoplasm"/>
    <property type="evidence" value="ECO:0007669"/>
    <property type="project" value="UniProtKB-SubCell"/>
</dbReference>
<dbReference type="GO" id="GO:0008777">
    <property type="term" value="F:acetylornithine deacetylase activity"/>
    <property type="evidence" value="ECO:0007669"/>
    <property type="project" value="UniProtKB-UniRule"/>
</dbReference>
<dbReference type="GO" id="GO:0008270">
    <property type="term" value="F:zinc ion binding"/>
    <property type="evidence" value="ECO:0007669"/>
    <property type="project" value="UniProtKB-UniRule"/>
</dbReference>
<dbReference type="GO" id="GO:0006526">
    <property type="term" value="P:L-arginine biosynthetic process"/>
    <property type="evidence" value="ECO:0007669"/>
    <property type="project" value="UniProtKB-UniRule"/>
</dbReference>
<dbReference type="CDD" id="cd03894">
    <property type="entry name" value="M20_ArgE"/>
    <property type="match status" value="1"/>
</dbReference>
<dbReference type="FunFam" id="3.30.70.360:FF:000003">
    <property type="entry name" value="Acetylornithine deacetylase"/>
    <property type="match status" value="1"/>
</dbReference>
<dbReference type="Gene3D" id="3.30.70.360">
    <property type="match status" value="1"/>
</dbReference>
<dbReference type="Gene3D" id="3.40.630.10">
    <property type="entry name" value="Zn peptidases"/>
    <property type="match status" value="1"/>
</dbReference>
<dbReference type="HAMAP" id="MF_01108">
    <property type="entry name" value="ArgE"/>
    <property type="match status" value="1"/>
</dbReference>
<dbReference type="InterPro" id="IPR010169">
    <property type="entry name" value="AcOrn-deacetyl"/>
</dbReference>
<dbReference type="InterPro" id="IPR001261">
    <property type="entry name" value="ArgE/DapE_CS"/>
</dbReference>
<dbReference type="InterPro" id="IPR036264">
    <property type="entry name" value="Bact_exopeptidase_dim_dom"/>
</dbReference>
<dbReference type="InterPro" id="IPR002933">
    <property type="entry name" value="Peptidase_M20"/>
</dbReference>
<dbReference type="InterPro" id="IPR011650">
    <property type="entry name" value="Peptidase_M20_dimer"/>
</dbReference>
<dbReference type="InterPro" id="IPR050072">
    <property type="entry name" value="Peptidase_M20A"/>
</dbReference>
<dbReference type="NCBIfam" id="TIGR01892">
    <property type="entry name" value="AcOrn-deacetyl"/>
    <property type="match status" value="1"/>
</dbReference>
<dbReference type="NCBIfam" id="NF003474">
    <property type="entry name" value="PRK05111.1"/>
    <property type="match status" value="1"/>
</dbReference>
<dbReference type="PANTHER" id="PTHR43808">
    <property type="entry name" value="ACETYLORNITHINE DEACETYLASE"/>
    <property type="match status" value="1"/>
</dbReference>
<dbReference type="PANTHER" id="PTHR43808:SF1">
    <property type="entry name" value="ACETYLORNITHINE DEACETYLASE"/>
    <property type="match status" value="1"/>
</dbReference>
<dbReference type="Pfam" id="PF07687">
    <property type="entry name" value="M20_dimer"/>
    <property type="match status" value="1"/>
</dbReference>
<dbReference type="Pfam" id="PF01546">
    <property type="entry name" value="Peptidase_M20"/>
    <property type="match status" value="1"/>
</dbReference>
<dbReference type="SUPFAM" id="SSF55031">
    <property type="entry name" value="Bacterial exopeptidase dimerisation domain"/>
    <property type="match status" value="1"/>
</dbReference>
<dbReference type="SUPFAM" id="SSF53187">
    <property type="entry name" value="Zn-dependent exopeptidases"/>
    <property type="match status" value="1"/>
</dbReference>
<dbReference type="PROSITE" id="PS00758">
    <property type="entry name" value="ARGE_DAPE_CPG2_1"/>
    <property type="match status" value="1"/>
</dbReference>
<dbReference type="PROSITE" id="PS00759">
    <property type="entry name" value="ARGE_DAPE_CPG2_2"/>
    <property type="match status" value="1"/>
</dbReference>
<accession>B8D8K5</accession>
<name>ARGE_BUCA5</name>
<sequence>MIRKIPSFIEVYKSLIQIPTISSNNKLLDQSNKNFIDLLSNYFSDLNFSVKNYQIPHTDKYNMLACVGSGNGGLLLSGHSDTVDFDEKKWTKDPFKLTETNNKFYGLGAVDMKGFFALILEVISSINIKKIIKPIYILATANEETDMSGAKNFIQSTIIKPDCIIIGEPTSLKLINAHKGHMSYSIKVIGDTGHSSNPDHGVNSIEIMHDVIRSLLILKKYFKEEYQHPNFSIPYPTMNLSSIHGGSAINRICPLCILNFEIRPIPGLTLTQIEIVIKEKLETIMKKWSHRIFIKKLFSSVPAYECPHNSGTIKIVEKLCQLNSAAVNYCTEAPFLQRIAPTLILGPGSIEQAHQPDEYLEHYFIQPTKNIITKLINKFCY</sequence>
<keyword id="KW-0028">Amino-acid biosynthesis</keyword>
<keyword id="KW-0055">Arginine biosynthesis</keyword>
<keyword id="KW-0170">Cobalt</keyword>
<keyword id="KW-0963">Cytoplasm</keyword>
<keyword id="KW-0378">Hydrolase</keyword>
<keyword id="KW-0479">Metal-binding</keyword>
<keyword id="KW-0862">Zinc</keyword>